<name>IBD3_HIRME</name>
<proteinExistence type="evidence at protein level"/>
<reference key="1">
    <citation type="journal article" date="1986" name="Biol. Chem. Hoppe-Seyler">
        <title>The primary structure of bdellin B-3 from the leech Hirudo medicinalis. Bdellin B-3 is a compact proteinase inhibitor of a 'non-classical' Kazal type. It is present in the leech in a high molecular mass form.</title>
        <authorList>
            <person name="Fink E."/>
            <person name="Rehm H."/>
            <person name="Gippner C."/>
            <person name="Bode W."/>
            <person name="Eulitz M."/>
            <person name="Machleidt W."/>
            <person name="Fritz H."/>
        </authorList>
    </citation>
    <scope>PROTEIN SEQUENCE</scope>
</reference>
<dbReference type="PIR" id="A25356">
    <property type="entry name" value="A25356"/>
</dbReference>
<dbReference type="PIR" id="A61417">
    <property type="entry name" value="A61417"/>
</dbReference>
<dbReference type="SMR" id="P09865"/>
<dbReference type="MEROPS" id="I01.020"/>
<dbReference type="GO" id="GO:0004867">
    <property type="term" value="F:serine-type endopeptidase inhibitor activity"/>
    <property type="evidence" value="ECO:0007669"/>
    <property type="project" value="UniProtKB-KW"/>
</dbReference>
<dbReference type="CDD" id="cd00104">
    <property type="entry name" value="KAZAL_FS"/>
    <property type="match status" value="1"/>
</dbReference>
<dbReference type="Gene3D" id="3.30.60.30">
    <property type="match status" value="1"/>
</dbReference>
<dbReference type="InterPro" id="IPR002350">
    <property type="entry name" value="Kazal_dom"/>
</dbReference>
<dbReference type="InterPro" id="IPR036058">
    <property type="entry name" value="Kazal_dom_sf"/>
</dbReference>
<dbReference type="Pfam" id="PF00050">
    <property type="entry name" value="Kazal_1"/>
    <property type="match status" value="1"/>
</dbReference>
<dbReference type="SMART" id="SM00280">
    <property type="entry name" value="KAZAL"/>
    <property type="match status" value="1"/>
</dbReference>
<dbReference type="SUPFAM" id="SSF100895">
    <property type="entry name" value="Kazal-type serine protease inhibitors"/>
    <property type="match status" value="1"/>
</dbReference>
<dbReference type="PROSITE" id="PS00282">
    <property type="entry name" value="KAZAL_1"/>
    <property type="match status" value="1"/>
</dbReference>
<dbReference type="PROSITE" id="PS51465">
    <property type="entry name" value="KAZAL_2"/>
    <property type="match status" value="1"/>
</dbReference>
<accession>P09865</accession>
<evidence type="ECO:0000255" key="1">
    <source>
        <dbReference type="PROSITE-ProRule" id="PRU00798"/>
    </source>
</evidence>
<comment type="function">
    <text>Proteinase inhibitor. Blocks the activity of trypsin, plasmin and sperm acrosin.</text>
</comment>
<feature type="chain" id="PRO_0000073196" description="Bdellin B-3">
    <location>
        <begin position="1"/>
        <end position="56" status="greater than"/>
    </location>
</feature>
<feature type="domain" description="Kazal-like" evidence="1">
    <location>
        <begin position="1"/>
        <end position="42"/>
    </location>
</feature>
<feature type="site" description="Reactive bond">
    <location>
        <begin position="8"/>
        <end position="9"/>
    </location>
</feature>
<feature type="disulfide bond" evidence="1">
    <location>
        <begin position="4"/>
        <end position="29"/>
    </location>
</feature>
<feature type="disulfide bond" evidence="1">
    <location>
        <begin position="6"/>
        <end position="25"/>
    </location>
</feature>
<feature type="disulfide bond" evidence="1">
    <location>
        <begin position="14"/>
        <end position="40"/>
    </location>
</feature>
<feature type="non-terminal residue">
    <location>
        <position position="56"/>
    </location>
</feature>
<protein>
    <recommendedName>
        <fullName>Bdellin B-3</fullName>
    </recommendedName>
</protein>
<sequence>DTECVCTKELHRVCGSDGVTYDNECLATCHGASVAHDHACEGHEEHHVDEHGEDHD</sequence>
<organism>
    <name type="scientific">Hirudo medicinalis</name>
    <name type="common">Medicinal leech</name>
    <dbReference type="NCBI Taxonomy" id="6421"/>
    <lineage>
        <taxon>Eukaryota</taxon>
        <taxon>Metazoa</taxon>
        <taxon>Spiralia</taxon>
        <taxon>Lophotrochozoa</taxon>
        <taxon>Annelida</taxon>
        <taxon>Clitellata</taxon>
        <taxon>Hirudinea</taxon>
        <taxon>Hirudinida</taxon>
        <taxon>Hirudiniformes</taxon>
        <taxon>Hirudinidae</taxon>
        <taxon>Hirudo</taxon>
    </lineage>
</organism>
<keyword id="KW-0903">Direct protein sequencing</keyword>
<keyword id="KW-1015">Disulfide bond</keyword>
<keyword id="KW-0646">Protease inhibitor</keyword>
<keyword id="KW-0722">Serine protease inhibitor</keyword>